<evidence type="ECO:0000250" key="1"/>
<evidence type="ECO:0000250" key="2">
    <source>
        <dbReference type="UniProtKB" id="Q7Z3B1"/>
    </source>
</evidence>
<evidence type="ECO:0000250" key="3">
    <source>
        <dbReference type="UniProtKB" id="Q80Z24"/>
    </source>
</evidence>
<evidence type="ECO:0000255" key="4"/>
<evidence type="ECO:0000255" key="5">
    <source>
        <dbReference type="PROSITE-ProRule" id="PRU00114"/>
    </source>
</evidence>
<evidence type="ECO:0000269" key="6">
    <source>
    </source>
</evidence>
<evidence type="ECO:0000305" key="7"/>
<reference key="1">
    <citation type="journal article" date="1999" name="J. Biol. Chem.">
        <title>Characterization of a novel rat brain glycosylphosphatidylinositol-anchored protein (Kilon), a member of the IgLON cell adhesion molecule family.</title>
        <authorList>
            <person name="Funatsu N."/>
            <person name="Miyata S."/>
            <person name="Kumanogoh H."/>
            <person name="Shigeta M."/>
            <person name="Hamada K."/>
            <person name="Endo Y."/>
            <person name="Sokawa Y."/>
            <person name="Maekawa S."/>
        </authorList>
    </citation>
    <scope>NUCLEOTIDE SEQUENCE [MRNA]</scope>
    <scope>PROTEIN SEQUENCE OF 32-62</scope>
</reference>
<accession>Q9Z0J8</accession>
<sequence>MVLLAQGACCSNQWLAAVLLSLCSCLPAGQSVDFPWAAVDNMLVRKGDTAVLRCYLEDGASKGAWLNRSSIIFAGGDKWSVDPRVSISTLNKRDYSLQIQNVDVTDDGPYTCSVQTQHTPRTMQVHLTVQVPPKIYDISNDMTINEGTNVTLTCLATGKPEPAISWRHISPSAKPFENGQYLDIYGITRDQAGEYECSAENDVSFPDVKKVRVVVNFAPTIQEIKSGTVTPGRSGLIRCEGAGVPPPAFEWYKGEKRLFNGQQGIIIQNFSTRSILTVTNVTQEHFGNYTCVAANKLGTTNASLPLNPPSTAQYGITGSACDLFSCWSLALTLSSVISIFYLKNAILQ</sequence>
<dbReference type="EMBL" id="AB017139">
    <property type="protein sequence ID" value="BAA75649.1"/>
    <property type="molecule type" value="mRNA"/>
</dbReference>
<dbReference type="RefSeq" id="NP_067714.1">
    <property type="nucleotide sequence ID" value="NM_021682.2"/>
</dbReference>
<dbReference type="SMR" id="Q9Z0J8"/>
<dbReference type="BioGRID" id="248762">
    <property type="interactions" value="1"/>
</dbReference>
<dbReference type="FunCoup" id="Q9Z0J8">
    <property type="interactions" value="1784"/>
</dbReference>
<dbReference type="STRING" id="10116.ENSRNOP00000035271"/>
<dbReference type="GlyCosmos" id="Q9Z0J8">
    <property type="glycosylation" value="6 sites, 5 glycans"/>
</dbReference>
<dbReference type="GlyGen" id="Q9Z0J8">
    <property type="glycosylation" value="7 sites, 5 N-linked glycans (5 sites)"/>
</dbReference>
<dbReference type="iPTMnet" id="Q9Z0J8"/>
<dbReference type="PhosphoSitePlus" id="Q9Z0J8"/>
<dbReference type="PaxDb" id="10116-ENSRNOP00000035271"/>
<dbReference type="Ensembl" id="ENSRNOT00000089396.2">
    <property type="protein sequence ID" value="ENSRNOP00000072152.2"/>
    <property type="gene ID" value="ENSRNOG00000021410.6"/>
</dbReference>
<dbReference type="GeneID" id="59318"/>
<dbReference type="KEGG" id="rno:59318"/>
<dbReference type="AGR" id="RGD:708416"/>
<dbReference type="CTD" id="257194"/>
<dbReference type="RGD" id="708416">
    <property type="gene designation" value="Negr1"/>
</dbReference>
<dbReference type="eggNOG" id="KOG3510">
    <property type="taxonomic scope" value="Eukaryota"/>
</dbReference>
<dbReference type="GeneTree" id="ENSGT00940000159289"/>
<dbReference type="InParanoid" id="Q9Z0J8"/>
<dbReference type="OMA" id="CLAISME"/>
<dbReference type="OrthoDB" id="6159398at2759"/>
<dbReference type="PhylomeDB" id="Q9Z0J8"/>
<dbReference type="TreeFam" id="TF351104"/>
<dbReference type="Reactome" id="R-RNO-163125">
    <property type="pathway name" value="Post-translational modification: synthesis of GPI-anchored proteins"/>
</dbReference>
<dbReference type="PRO" id="PR:Q9Z0J8"/>
<dbReference type="Proteomes" id="UP000002494">
    <property type="component" value="Chromosome 2"/>
</dbReference>
<dbReference type="GO" id="GO:0097440">
    <property type="term" value="C:apical dendrite"/>
    <property type="evidence" value="ECO:0000314"/>
    <property type="project" value="RGD"/>
</dbReference>
<dbReference type="GO" id="GO:0030425">
    <property type="term" value="C:dendrite"/>
    <property type="evidence" value="ECO:0000314"/>
    <property type="project" value="RGD"/>
</dbReference>
<dbReference type="GO" id="GO:0043198">
    <property type="term" value="C:dendritic shaft"/>
    <property type="evidence" value="ECO:0000314"/>
    <property type="project" value="RGD"/>
</dbReference>
<dbReference type="GO" id="GO:0043197">
    <property type="term" value="C:dendritic spine"/>
    <property type="evidence" value="ECO:0000314"/>
    <property type="project" value="RGD"/>
</dbReference>
<dbReference type="GO" id="GO:0043025">
    <property type="term" value="C:neuronal cell body"/>
    <property type="evidence" value="ECO:0000314"/>
    <property type="project" value="RGD"/>
</dbReference>
<dbReference type="GO" id="GO:0005886">
    <property type="term" value="C:plasma membrane"/>
    <property type="evidence" value="ECO:0000266"/>
    <property type="project" value="RGD"/>
</dbReference>
<dbReference type="GO" id="GO:0014069">
    <property type="term" value="C:postsynaptic density"/>
    <property type="evidence" value="ECO:0000314"/>
    <property type="project" value="RGD"/>
</dbReference>
<dbReference type="GO" id="GO:0098552">
    <property type="term" value="C:side of membrane"/>
    <property type="evidence" value="ECO:0007669"/>
    <property type="project" value="UniProtKB-KW"/>
</dbReference>
<dbReference type="GO" id="GO:0007420">
    <property type="term" value="P:brain development"/>
    <property type="evidence" value="ECO:0000266"/>
    <property type="project" value="RGD"/>
</dbReference>
<dbReference type="GO" id="GO:0098609">
    <property type="term" value="P:cell-cell adhesion"/>
    <property type="evidence" value="ECO:0000266"/>
    <property type="project" value="RGD"/>
</dbReference>
<dbReference type="GO" id="GO:0042632">
    <property type="term" value="P:cholesterol homeostasis"/>
    <property type="evidence" value="ECO:0000266"/>
    <property type="project" value="RGD"/>
</dbReference>
<dbReference type="GO" id="GO:0045444">
    <property type="term" value="P:fat cell differentiation"/>
    <property type="evidence" value="ECO:0000266"/>
    <property type="project" value="RGD"/>
</dbReference>
<dbReference type="GO" id="GO:0007631">
    <property type="term" value="P:feeding behavior"/>
    <property type="evidence" value="ECO:0000266"/>
    <property type="project" value="RGD"/>
</dbReference>
<dbReference type="GO" id="GO:0140042">
    <property type="term" value="P:lipid droplet formation"/>
    <property type="evidence" value="ECO:0000266"/>
    <property type="project" value="RGD"/>
</dbReference>
<dbReference type="GO" id="GO:0007626">
    <property type="term" value="P:locomotory behavior"/>
    <property type="evidence" value="ECO:0000266"/>
    <property type="project" value="RGD"/>
</dbReference>
<dbReference type="GO" id="GO:0060253">
    <property type="term" value="P:negative regulation of glial cell proliferation"/>
    <property type="evidence" value="ECO:0000314"/>
    <property type="project" value="RGD"/>
</dbReference>
<dbReference type="GO" id="GO:0051964">
    <property type="term" value="P:negative regulation of synapse assembly"/>
    <property type="evidence" value="ECO:0000314"/>
    <property type="project" value="RGD"/>
</dbReference>
<dbReference type="GO" id="GO:0031175">
    <property type="term" value="P:neuron projection development"/>
    <property type="evidence" value="ECO:0000266"/>
    <property type="project" value="RGD"/>
</dbReference>
<dbReference type="GO" id="GO:0048812">
    <property type="term" value="P:neuron projection morphogenesis"/>
    <property type="evidence" value="ECO:0000266"/>
    <property type="project" value="RGD"/>
</dbReference>
<dbReference type="GO" id="GO:0050850">
    <property type="term" value="P:positive regulation of calcium-mediated signaling"/>
    <property type="evidence" value="ECO:0000266"/>
    <property type="project" value="RGD"/>
</dbReference>
<dbReference type="GO" id="GO:0010976">
    <property type="term" value="P:positive regulation of neuron projection development"/>
    <property type="evidence" value="ECO:0000266"/>
    <property type="project" value="RGD"/>
</dbReference>
<dbReference type="GO" id="GO:0046878">
    <property type="term" value="P:positive regulation of saliva secretion"/>
    <property type="evidence" value="ECO:0000266"/>
    <property type="project" value="RGD"/>
</dbReference>
<dbReference type="GO" id="GO:0051963">
    <property type="term" value="P:regulation of synapse assembly"/>
    <property type="evidence" value="ECO:0000315"/>
    <property type="project" value="RGD"/>
</dbReference>
<dbReference type="GO" id="GO:0060538">
    <property type="term" value="P:skeletal muscle organ development"/>
    <property type="evidence" value="ECO:0000266"/>
    <property type="project" value="RGD"/>
</dbReference>
<dbReference type="GO" id="GO:0035176">
    <property type="term" value="P:social behavior"/>
    <property type="evidence" value="ECO:0000266"/>
    <property type="project" value="RGD"/>
</dbReference>
<dbReference type="FunFam" id="2.60.40.10:FF:000013">
    <property type="entry name" value="cell adhesion molecule 1 isoform X1"/>
    <property type="match status" value="1"/>
</dbReference>
<dbReference type="FunFam" id="2.60.40.10:FF:000500">
    <property type="entry name" value="limbic system-associated membrane protein isoform X1"/>
    <property type="match status" value="1"/>
</dbReference>
<dbReference type="FunFam" id="2.60.40.10:FF:000113">
    <property type="entry name" value="Opioid-binding protein/cell adhesion molecule"/>
    <property type="match status" value="1"/>
</dbReference>
<dbReference type="Gene3D" id="2.60.40.10">
    <property type="entry name" value="Immunoglobulins"/>
    <property type="match status" value="3"/>
</dbReference>
<dbReference type="InterPro" id="IPR007110">
    <property type="entry name" value="Ig-like_dom"/>
</dbReference>
<dbReference type="InterPro" id="IPR036179">
    <property type="entry name" value="Ig-like_dom_sf"/>
</dbReference>
<dbReference type="InterPro" id="IPR013783">
    <property type="entry name" value="Ig-like_fold"/>
</dbReference>
<dbReference type="InterPro" id="IPR013098">
    <property type="entry name" value="Ig_I-set"/>
</dbReference>
<dbReference type="InterPro" id="IPR003599">
    <property type="entry name" value="Ig_sub"/>
</dbReference>
<dbReference type="InterPro" id="IPR003598">
    <property type="entry name" value="Ig_sub2"/>
</dbReference>
<dbReference type="InterPro" id="IPR050876">
    <property type="entry name" value="IgLON_domain"/>
</dbReference>
<dbReference type="PANTHER" id="PTHR42757">
    <property type="entry name" value="IGLON FAMILY OF IMMUNOGLOBULIN SUPERFAMILY-RELATED"/>
    <property type="match status" value="1"/>
</dbReference>
<dbReference type="PANTHER" id="PTHR42757:SF6">
    <property type="entry name" value="NEURONAL GROWTH REGULATOR 1"/>
    <property type="match status" value="1"/>
</dbReference>
<dbReference type="Pfam" id="PF07679">
    <property type="entry name" value="I-set"/>
    <property type="match status" value="1"/>
</dbReference>
<dbReference type="Pfam" id="PF13927">
    <property type="entry name" value="Ig_3"/>
    <property type="match status" value="2"/>
</dbReference>
<dbReference type="SMART" id="SM00409">
    <property type="entry name" value="IG"/>
    <property type="match status" value="3"/>
</dbReference>
<dbReference type="SMART" id="SM00408">
    <property type="entry name" value="IGc2"/>
    <property type="match status" value="3"/>
</dbReference>
<dbReference type="SUPFAM" id="SSF48726">
    <property type="entry name" value="Immunoglobulin"/>
    <property type="match status" value="3"/>
</dbReference>
<dbReference type="PROSITE" id="PS50835">
    <property type="entry name" value="IG_LIKE"/>
    <property type="match status" value="3"/>
</dbReference>
<organism>
    <name type="scientific">Rattus norvegicus</name>
    <name type="common">Rat</name>
    <dbReference type="NCBI Taxonomy" id="10116"/>
    <lineage>
        <taxon>Eukaryota</taxon>
        <taxon>Metazoa</taxon>
        <taxon>Chordata</taxon>
        <taxon>Craniata</taxon>
        <taxon>Vertebrata</taxon>
        <taxon>Euteleostomi</taxon>
        <taxon>Mammalia</taxon>
        <taxon>Eutheria</taxon>
        <taxon>Euarchontoglires</taxon>
        <taxon>Glires</taxon>
        <taxon>Rodentia</taxon>
        <taxon>Myomorpha</taxon>
        <taxon>Muroidea</taxon>
        <taxon>Muridae</taxon>
        <taxon>Murinae</taxon>
        <taxon>Rattus</taxon>
    </lineage>
</organism>
<name>NEGR1_RAT</name>
<protein>
    <recommendedName>
        <fullName>Neuronal growth regulator 1</fullName>
    </recommendedName>
    <alternativeName>
        <fullName>Kindred of IgLON</fullName>
        <shortName>Kilon</shortName>
    </alternativeName>
</protein>
<comment type="function">
    <text evidence="1">May be involved in cell-adhesion. May function as a trans-neural growth-promoting factor in regenerative axon sprouting in the mammalian brain (By similarity).</text>
</comment>
<comment type="subcellular location">
    <subcellularLocation>
        <location>Cell membrane</location>
        <topology>Lipid-anchor</topology>
        <topology>GPI-anchor</topology>
    </subcellularLocation>
</comment>
<comment type="tissue specificity">
    <text>Highly expressed in brain.</text>
</comment>
<comment type="PTM">
    <text>Glycosylated.</text>
</comment>
<comment type="similarity">
    <text evidence="7">Belongs to the immunoglobulin superfamily. IgLON family.</text>
</comment>
<keyword id="KW-0130">Cell adhesion</keyword>
<keyword id="KW-1003">Cell membrane</keyword>
<keyword id="KW-0903">Direct protein sequencing</keyword>
<keyword id="KW-1015">Disulfide bond</keyword>
<keyword id="KW-0325">Glycoprotein</keyword>
<keyword id="KW-0336">GPI-anchor</keyword>
<keyword id="KW-0393">Immunoglobulin domain</keyword>
<keyword id="KW-0449">Lipoprotein</keyword>
<keyword id="KW-0472">Membrane</keyword>
<keyword id="KW-0597">Phosphoprotein</keyword>
<keyword id="KW-1185">Reference proteome</keyword>
<keyword id="KW-0677">Repeat</keyword>
<keyword id="KW-0732">Signal</keyword>
<feature type="signal peptide" evidence="6">
    <location>
        <begin position="1"/>
        <end position="31"/>
    </location>
</feature>
<feature type="chain" id="PRO_0000015041" description="Neuronal growth regulator 1">
    <location>
        <begin position="32"/>
        <end position="318"/>
    </location>
</feature>
<feature type="propeptide" id="PRO_0000015042" description="Removed in mature form" evidence="4">
    <location>
        <begin position="319"/>
        <end position="348"/>
    </location>
</feature>
<feature type="domain" description="Ig-like C2-type 1">
    <location>
        <begin position="32"/>
        <end position="128"/>
    </location>
</feature>
<feature type="domain" description="Ig-like C2-type 2">
    <location>
        <begin position="133"/>
        <end position="215"/>
    </location>
</feature>
<feature type="domain" description="Ig-like C2-type 3">
    <location>
        <begin position="219"/>
        <end position="307"/>
    </location>
</feature>
<feature type="modified residue" description="Phosphotyrosine" evidence="3">
    <location>
        <position position="181"/>
    </location>
</feature>
<feature type="lipid moiety-binding region" description="GPI-anchor amidated glycine" evidence="2">
    <location>
        <position position="318"/>
    </location>
</feature>
<feature type="glycosylation site" description="N-linked (GlcNAc...) asparagine" evidence="4">
    <location>
        <position position="67"/>
    </location>
</feature>
<feature type="glycosylation site" description="N-linked (GlcNAc...) asparagine" evidence="4">
    <location>
        <position position="149"/>
    </location>
</feature>
<feature type="glycosylation site" description="N-linked (GlcNAc...) asparagine" evidence="4">
    <location>
        <position position="269"/>
    </location>
</feature>
<feature type="glycosylation site" description="N-linked (GlcNAc...) asparagine" evidence="4">
    <location>
        <position position="280"/>
    </location>
</feature>
<feature type="glycosylation site" description="N-linked (GlcNAc...) asparagine" evidence="4">
    <location>
        <position position="288"/>
    </location>
</feature>
<feature type="glycosylation site" description="N-linked (GlcNAc...) asparagine" evidence="4">
    <location>
        <position position="301"/>
    </location>
</feature>
<feature type="disulfide bond" evidence="5">
    <location>
        <begin position="54"/>
        <end position="112"/>
    </location>
</feature>
<feature type="disulfide bond" evidence="5">
    <location>
        <begin position="154"/>
        <end position="197"/>
    </location>
</feature>
<feature type="disulfide bond" evidence="5">
    <location>
        <begin position="239"/>
        <end position="291"/>
    </location>
</feature>
<proteinExistence type="evidence at protein level"/>
<gene>
    <name type="primary">Negr1</name>
</gene>